<keyword id="KW-0460">Magnesium</keyword>
<keyword id="KW-0464">Manganese</keyword>
<keyword id="KW-0474">Menaquinone biosynthesis</keyword>
<keyword id="KW-0479">Metal-binding</keyword>
<keyword id="KW-0786">Thiamine pyrophosphate</keyword>
<keyword id="KW-0808">Transferase</keyword>
<dbReference type="EC" id="2.2.1.9" evidence="1"/>
<dbReference type="EMBL" id="AE016795">
    <property type="protein sequence ID" value="AAO11488.1"/>
    <property type="molecule type" value="Genomic_DNA"/>
</dbReference>
<dbReference type="RefSeq" id="WP_011080964.1">
    <property type="nucleotide sequence ID" value="NC_004459.3"/>
</dbReference>
<dbReference type="SMR" id="Q8D820"/>
<dbReference type="KEGG" id="vvu:VV1_3172"/>
<dbReference type="HOGENOM" id="CLU_006051_3_0_6"/>
<dbReference type="UniPathway" id="UPA00079"/>
<dbReference type="UniPathway" id="UPA01057">
    <property type="reaction ID" value="UER00164"/>
</dbReference>
<dbReference type="Proteomes" id="UP000002275">
    <property type="component" value="Chromosome 1"/>
</dbReference>
<dbReference type="GO" id="GO:0070204">
    <property type="term" value="F:2-succinyl-5-enolpyruvyl-6-hydroxy-3-cyclohexene-1-carboxylic-acid synthase activity"/>
    <property type="evidence" value="ECO:0007669"/>
    <property type="project" value="UniProtKB-UniRule"/>
</dbReference>
<dbReference type="GO" id="GO:0000287">
    <property type="term" value="F:magnesium ion binding"/>
    <property type="evidence" value="ECO:0007669"/>
    <property type="project" value="UniProtKB-UniRule"/>
</dbReference>
<dbReference type="GO" id="GO:0030145">
    <property type="term" value="F:manganese ion binding"/>
    <property type="evidence" value="ECO:0007669"/>
    <property type="project" value="UniProtKB-UniRule"/>
</dbReference>
<dbReference type="GO" id="GO:0030976">
    <property type="term" value="F:thiamine pyrophosphate binding"/>
    <property type="evidence" value="ECO:0007669"/>
    <property type="project" value="UniProtKB-UniRule"/>
</dbReference>
<dbReference type="GO" id="GO:0009234">
    <property type="term" value="P:menaquinone biosynthetic process"/>
    <property type="evidence" value="ECO:0007669"/>
    <property type="project" value="UniProtKB-UniRule"/>
</dbReference>
<dbReference type="CDD" id="cd07037">
    <property type="entry name" value="TPP_PYR_MenD"/>
    <property type="match status" value="1"/>
</dbReference>
<dbReference type="CDD" id="cd02009">
    <property type="entry name" value="TPP_SHCHC_synthase"/>
    <property type="match status" value="1"/>
</dbReference>
<dbReference type="Gene3D" id="3.40.50.970">
    <property type="match status" value="2"/>
</dbReference>
<dbReference type="Gene3D" id="3.40.50.1220">
    <property type="entry name" value="TPP-binding domain"/>
    <property type="match status" value="1"/>
</dbReference>
<dbReference type="HAMAP" id="MF_01659">
    <property type="entry name" value="MenD"/>
    <property type="match status" value="1"/>
</dbReference>
<dbReference type="InterPro" id="IPR029035">
    <property type="entry name" value="DHS-like_NAD/FAD-binding_dom"/>
</dbReference>
<dbReference type="InterPro" id="IPR004433">
    <property type="entry name" value="MenaQ_synth_MenD"/>
</dbReference>
<dbReference type="InterPro" id="IPR032264">
    <property type="entry name" value="MenD_middle"/>
</dbReference>
<dbReference type="InterPro" id="IPR029061">
    <property type="entry name" value="THDP-binding"/>
</dbReference>
<dbReference type="InterPro" id="IPR012001">
    <property type="entry name" value="Thiamin_PyroP_enz_TPP-bd_dom"/>
</dbReference>
<dbReference type="InterPro" id="IPR011766">
    <property type="entry name" value="TPP_enzyme_TPP-bd"/>
</dbReference>
<dbReference type="NCBIfam" id="TIGR00173">
    <property type="entry name" value="menD"/>
    <property type="match status" value="1"/>
</dbReference>
<dbReference type="PANTHER" id="PTHR42916">
    <property type="entry name" value="2-SUCCINYL-5-ENOLPYRUVYL-6-HYDROXY-3-CYCLOHEXENE-1-CARBOXYLATE SYNTHASE"/>
    <property type="match status" value="1"/>
</dbReference>
<dbReference type="PANTHER" id="PTHR42916:SF1">
    <property type="entry name" value="PROTEIN PHYLLO, CHLOROPLASTIC"/>
    <property type="match status" value="1"/>
</dbReference>
<dbReference type="Pfam" id="PF02775">
    <property type="entry name" value="TPP_enzyme_C"/>
    <property type="match status" value="1"/>
</dbReference>
<dbReference type="Pfam" id="PF16582">
    <property type="entry name" value="TPP_enzyme_M_2"/>
    <property type="match status" value="1"/>
</dbReference>
<dbReference type="Pfam" id="PF02776">
    <property type="entry name" value="TPP_enzyme_N"/>
    <property type="match status" value="1"/>
</dbReference>
<dbReference type="PIRSF" id="PIRSF004983">
    <property type="entry name" value="MenD"/>
    <property type="match status" value="1"/>
</dbReference>
<dbReference type="SUPFAM" id="SSF52467">
    <property type="entry name" value="DHS-like NAD/FAD-binding domain"/>
    <property type="match status" value="1"/>
</dbReference>
<dbReference type="SUPFAM" id="SSF52518">
    <property type="entry name" value="Thiamin diphosphate-binding fold (THDP-binding)"/>
    <property type="match status" value="2"/>
</dbReference>
<protein>
    <recommendedName>
        <fullName evidence="1">2-succinyl-5-enolpyruvyl-6-hydroxy-3-cyclohexene-1-carboxylate synthase</fullName>
        <shortName evidence="1">SEPHCHC synthase</shortName>
        <ecNumber evidence="1">2.2.1.9</ecNumber>
    </recommendedName>
    <alternativeName>
        <fullName evidence="1">Menaquinone biosynthesis protein MenD</fullName>
    </alternativeName>
</protein>
<feature type="chain" id="PRO_0000341887" description="2-succinyl-5-enolpyruvyl-6-hydroxy-3-cyclohexene-1-carboxylate synthase">
    <location>
        <begin position="1"/>
        <end position="564"/>
    </location>
</feature>
<name>MEND_VIBVU</name>
<reference key="1">
    <citation type="submission" date="2002-12" db="EMBL/GenBank/DDBJ databases">
        <title>Complete genome sequence of Vibrio vulnificus CMCP6.</title>
        <authorList>
            <person name="Rhee J.H."/>
            <person name="Kim S.Y."/>
            <person name="Chung S.S."/>
            <person name="Kim J.J."/>
            <person name="Moon Y.H."/>
            <person name="Jeong H."/>
            <person name="Choy H.E."/>
        </authorList>
    </citation>
    <scope>NUCLEOTIDE SEQUENCE [LARGE SCALE GENOMIC DNA]</scope>
    <source>
        <strain>CMCP6</strain>
    </source>
</reference>
<gene>
    <name evidence="1" type="primary">menD</name>
    <name type="ordered locus">VV1_3172</name>
</gene>
<evidence type="ECO:0000255" key="1">
    <source>
        <dbReference type="HAMAP-Rule" id="MF_01659"/>
    </source>
</evidence>
<comment type="function">
    <text evidence="1">Catalyzes the thiamine diphosphate-dependent decarboxylation of 2-oxoglutarate and the subsequent addition of the resulting succinic semialdehyde-thiamine pyrophosphate anion to isochorismate to yield 2-succinyl-5-enolpyruvyl-6-hydroxy-3-cyclohexene-1-carboxylate (SEPHCHC).</text>
</comment>
<comment type="catalytic activity">
    <reaction evidence="1">
        <text>isochorismate + 2-oxoglutarate + H(+) = 5-enolpyruvoyl-6-hydroxy-2-succinyl-cyclohex-3-ene-1-carboxylate + CO2</text>
        <dbReference type="Rhea" id="RHEA:25593"/>
        <dbReference type="ChEBI" id="CHEBI:15378"/>
        <dbReference type="ChEBI" id="CHEBI:16526"/>
        <dbReference type="ChEBI" id="CHEBI:16810"/>
        <dbReference type="ChEBI" id="CHEBI:29780"/>
        <dbReference type="ChEBI" id="CHEBI:58818"/>
        <dbReference type="EC" id="2.2.1.9"/>
    </reaction>
</comment>
<comment type="cofactor">
    <cofactor evidence="1">
        <name>Mg(2+)</name>
        <dbReference type="ChEBI" id="CHEBI:18420"/>
    </cofactor>
    <cofactor evidence="1">
        <name>Mn(2+)</name>
        <dbReference type="ChEBI" id="CHEBI:29035"/>
    </cofactor>
</comment>
<comment type="cofactor">
    <cofactor evidence="1">
        <name>thiamine diphosphate</name>
        <dbReference type="ChEBI" id="CHEBI:58937"/>
    </cofactor>
    <text evidence="1">Binds 1 thiamine pyrophosphate per subunit.</text>
</comment>
<comment type="pathway">
    <text evidence="1">Quinol/quinone metabolism; 1,4-dihydroxy-2-naphthoate biosynthesis; 1,4-dihydroxy-2-naphthoate from chorismate: step 2/7.</text>
</comment>
<comment type="pathway">
    <text evidence="1">Quinol/quinone metabolism; menaquinone biosynthesis.</text>
</comment>
<comment type="subunit">
    <text evidence="1">Homodimer.</text>
</comment>
<comment type="similarity">
    <text evidence="1">Belongs to the TPP enzyme family. MenD subfamily.</text>
</comment>
<proteinExistence type="inferred from homology"/>
<sequence length="564" mass="61869">MNHDQAVLNRIWCETLFEELYRFGVRDVCVAPGSRSTPLALEANAHTRLKLHTHFDERGLGFLALGLAKASQRPVAVVVTSGTAVANLLPAVAEAGLTGEKLVLLTADRPIELVGCGANQAIAQQGIFSNHVCASLNLPSPNTQTSLNWLLTSVDQVLHQQAVSGHAVHINCPFPEPLYSNAPKSIYQSYIDTVDVWRAEGGIYSNKQMPLPMPPSLAEIEQRKGVVVIGSVTLQEAKQAHQFGAQMGWPVLCDPQSGTTSDWSGFDIWLQNPAARAQLSQCDLIIQFGRRLVSKRLHQWLEQQVQAGCDYWYVSPDFERDNQSHLPQQHFVCSIAAWLNVVTNREVQPVAWANELPRFSAEVNKQAREIAQSSLCEMMIALHLSSLVGSADLFLGNSLFVRMVDMVGQLHGVETFTNRGASGIDGLFATASGVQRARSNPMLLMIGDTSALYDLNSLALYSHQETPVVIVVTNNDGGAIFDLLPVPPQQKQALYQMPHGYRFEFAAKQFGLDYVCPTSMTELTERIVGHFAHGCGALLVEVNTPPNQASQHIKQLADHVRSLV</sequence>
<accession>Q8D820</accession>
<organism>
    <name type="scientific">Vibrio vulnificus (strain CMCP6)</name>
    <dbReference type="NCBI Taxonomy" id="216895"/>
    <lineage>
        <taxon>Bacteria</taxon>
        <taxon>Pseudomonadati</taxon>
        <taxon>Pseudomonadota</taxon>
        <taxon>Gammaproteobacteria</taxon>
        <taxon>Vibrionales</taxon>
        <taxon>Vibrionaceae</taxon>
        <taxon>Vibrio</taxon>
    </lineage>
</organism>